<comment type="function">
    <text evidence="1">Transmembrane component of the tectonic-like complex, a complex localized at the transition zone of primary cilia and acting as a barrier that prevents diffusion of transmembrane proteins between the cilia and plasma membranes. Required for ciliogenesis and sonic hedgehog/SHH signaling (By similarity).</text>
</comment>
<comment type="subunit">
    <text evidence="2">Part of the tectonic-like complex (also named B9 complex). Interacts with TMEM107.</text>
</comment>
<comment type="subcellular location">
    <subcellularLocation>
        <location evidence="1">Cell projection</location>
        <location evidence="1">Cilium membrane</location>
        <topology evidence="1">Multi-pass membrane protein</topology>
    </subcellularLocation>
    <text evidence="1">Localizes to the transition zone of primary cilia; SEPT2 is required for localization to the transition zone.</text>
</comment>
<comment type="similarity">
    <text evidence="4">Belongs to the TMEM231 family.</text>
</comment>
<protein>
    <recommendedName>
        <fullName>Transmembrane protein 231</fullName>
    </recommendedName>
</protein>
<keyword id="KW-1003">Cell membrane</keyword>
<keyword id="KW-0966">Cell projection</keyword>
<keyword id="KW-0969">Cilium</keyword>
<keyword id="KW-0970">Cilium biogenesis/degradation</keyword>
<keyword id="KW-0325">Glycoprotein</keyword>
<keyword id="KW-0472">Membrane</keyword>
<keyword id="KW-1185">Reference proteome</keyword>
<keyword id="KW-0812">Transmembrane</keyword>
<keyword id="KW-1133">Transmembrane helix</keyword>
<sequence>MALYELFSHPVERSYRAGLCSKAALFLLLAAALTYIPPLLVAFRSHGFWLKRSSYEEQPTVRFQHQVLLVALLGPESGGFLAWSTFPAFNRLQGDRLRVPLVSTREEDRNQDGKMDMLHFKLELPLQSTEHVLGVQLILTFSYQLHRMATPVMQSMAFLQSSFPVPGSQLYVNGDLRLQQKQPLSCGGLDARYNVSVINGTSPFAYDYDLTHVIAAYQERNVTTILNDPNPIWLVGRAADAPFVINAIIRYPVEVISYQPGFWEMVKFAWVQYVSILLIFVWVFERIKIFVFQNQVVTTIPVTATPRGEVCKEHLS</sequence>
<dbReference type="EMBL" id="CR858545">
    <property type="protein sequence ID" value="CAH90772.1"/>
    <property type="molecule type" value="mRNA"/>
</dbReference>
<dbReference type="RefSeq" id="NP_001125433.1">
    <property type="nucleotide sequence ID" value="NM_001131961.2"/>
</dbReference>
<dbReference type="FunCoup" id="Q5RBT8">
    <property type="interactions" value="344"/>
</dbReference>
<dbReference type="STRING" id="9601.ENSPPYP00000008537"/>
<dbReference type="GlyCosmos" id="Q5RBT8">
    <property type="glycosylation" value="3 sites, No reported glycans"/>
</dbReference>
<dbReference type="GeneID" id="100172341"/>
<dbReference type="KEGG" id="pon:100172341"/>
<dbReference type="CTD" id="79583"/>
<dbReference type="eggNOG" id="KOG4838">
    <property type="taxonomic scope" value="Eukaryota"/>
</dbReference>
<dbReference type="InParanoid" id="Q5RBT8"/>
<dbReference type="OrthoDB" id="426438at2759"/>
<dbReference type="Proteomes" id="UP000001595">
    <property type="component" value="Unplaced"/>
</dbReference>
<dbReference type="GO" id="GO:0060170">
    <property type="term" value="C:ciliary membrane"/>
    <property type="evidence" value="ECO:0000250"/>
    <property type="project" value="UniProtKB"/>
</dbReference>
<dbReference type="GO" id="GO:0035869">
    <property type="term" value="C:ciliary transition zone"/>
    <property type="evidence" value="ECO:0000250"/>
    <property type="project" value="UniProtKB"/>
</dbReference>
<dbReference type="GO" id="GO:0036038">
    <property type="term" value="C:MKS complex"/>
    <property type="evidence" value="ECO:0000250"/>
    <property type="project" value="UniProtKB"/>
</dbReference>
<dbReference type="GO" id="GO:0060271">
    <property type="term" value="P:cilium assembly"/>
    <property type="evidence" value="ECO:0000250"/>
    <property type="project" value="UniProtKB"/>
</dbReference>
<dbReference type="GO" id="GO:0032880">
    <property type="term" value="P:regulation of protein localization"/>
    <property type="evidence" value="ECO:0007669"/>
    <property type="project" value="TreeGrafter"/>
</dbReference>
<dbReference type="GO" id="GO:0007224">
    <property type="term" value="P:smoothened signaling pathway"/>
    <property type="evidence" value="ECO:0000250"/>
    <property type="project" value="UniProtKB"/>
</dbReference>
<dbReference type="InterPro" id="IPR019306">
    <property type="entry name" value="TMEM231"/>
</dbReference>
<dbReference type="PANTHER" id="PTHR14605">
    <property type="entry name" value="CHST5 PROTEIN"/>
    <property type="match status" value="1"/>
</dbReference>
<dbReference type="PANTHER" id="PTHR14605:SF1">
    <property type="entry name" value="TRANSMEMBRANE PROTEIN 231"/>
    <property type="match status" value="1"/>
</dbReference>
<dbReference type="Pfam" id="PF10149">
    <property type="entry name" value="TM231"/>
    <property type="match status" value="1"/>
</dbReference>
<gene>
    <name type="primary">TMEM231</name>
</gene>
<reference key="1">
    <citation type="submission" date="2004-11" db="EMBL/GenBank/DDBJ databases">
        <authorList>
            <consortium name="The German cDNA consortium"/>
        </authorList>
    </citation>
    <scope>NUCLEOTIDE SEQUENCE [LARGE SCALE MRNA]</scope>
    <source>
        <tissue>Heart</tissue>
    </source>
</reference>
<organism>
    <name type="scientific">Pongo abelii</name>
    <name type="common">Sumatran orangutan</name>
    <name type="synonym">Pongo pygmaeus abelii</name>
    <dbReference type="NCBI Taxonomy" id="9601"/>
    <lineage>
        <taxon>Eukaryota</taxon>
        <taxon>Metazoa</taxon>
        <taxon>Chordata</taxon>
        <taxon>Craniata</taxon>
        <taxon>Vertebrata</taxon>
        <taxon>Euteleostomi</taxon>
        <taxon>Mammalia</taxon>
        <taxon>Eutheria</taxon>
        <taxon>Euarchontoglires</taxon>
        <taxon>Primates</taxon>
        <taxon>Haplorrhini</taxon>
        <taxon>Catarrhini</taxon>
        <taxon>Hominidae</taxon>
        <taxon>Pongo</taxon>
    </lineage>
</organism>
<evidence type="ECO:0000250" key="1"/>
<evidence type="ECO:0000250" key="2">
    <source>
        <dbReference type="UniProtKB" id="Q9H6L2"/>
    </source>
</evidence>
<evidence type="ECO:0000255" key="3"/>
<evidence type="ECO:0000305" key="4"/>
<accession>Q5RBT8</accession>
<proteinExistence type="evidence at transcript level"/>
<feature type="chain" id="PRO_0000317522" description="Transmembrane protein 231">
    <location>
        <begin position="1"/>
        <end position="316"/>
    </location>
</feature>
<feature type="transmembrane region" description="Helical" evidence="3">
    <location>
        <begin position="23"/>
        <end position="43"/>
    </location>
</feature>
<feature type="transmembrane region" description="Helical" evidence="3">
    <location>
        <begin position="264"/>
        <end position="284"/>
    </location>
</feature>
<feature type="glycosylation site" description="N-linked (GlcNAc...) asparagine" evidence="3">
    <location>
        <position position="194"/>
    </location>
</feature>
<feature type="glycosylation site" description="N-linked (GlcNAc...) asparagine" evidence="3">
    <location>
        <position position="199"/>
    </location>
</feature>
<feature type="glycosylation site" description="N-linked (GlcNAc...) asparagine" evidence="3">
    <location>
        <position position="221"/>
    </location>
</feature>
<name>TM231_PONAB</name>